<comment type="function">
    <molecule>Ghrelin</molecule>
    <text evidence="1">Ghrelin is the ligand for growth hormone secretagogue receptor type 1 (GHSR). Induces the release of growth hormone from the pituitary. Has an appetite-stimulating effect, induces adiposity and stimulates gastric acid secretion. Involved in growth regulation (By similarity).</text>
</comment>
<comment type="function">
    <molecule>Obestatin</molecule>
    <text evidence="1">Obestatin may be the ligand for GPR39. May have an appetite-reducing effect resulting in decreased food intake. May reduce gastric emptying activity and jejunal motility (By similarity).</text>
</comment>
<comment type="subcellular location">
    <subcellularLocation>
        <location evidence="1">Secreted</location>
    </subcellularLocation>
</comment>
<comment type="PTM">
    <text evidence="1 2">O-octanoylated by GOAT/MBOAT4 (By similarity). O-octanoylation is essential for ghrelin activity.</text>
</comment>
<comment type="PTM">
    <text evidence="1">Amidation of Leu-98 is essential for obestatin activity.</text>
</comment>
<comment type="similarity">
    <text evidence="4">Belongs to the motilin family.</text>
</comment>
<comment type="online information" name="Protein Spotlight">
    <link uri="https://www.proteinspotlight.org/back_issues/066"/>
    <text>Gut feelings - Issue 66 of January 2006</text>
</comment>
<reference key="1">
    <citation type="submission" date="2006-09" db="EMBL/GenBank/DDBJ databases">
        <title>Quantitative genetic analysis and characterization of ghrelin in baboons.</title>
        <authorList>
            <person name="Voruganti V.S."/>
            <person name="Tejero M.E."/>
            <person name="Proffitt J.M."/>
            <person name="Cole S.A."/>
            <person name="Freeland-Graves J.H."/>
            <person name="Comuzzie A.G."/>
        </authorList>
    </citation>
    <scope>NUCLEOTIDE SEQUENCE [MRNA]</scope>
</reference>
<accession>A0MLS4</accession>
<proteinExistence type="inferred from homology"/>
<feature type="signal peptide" evidence="1">
    <location>
        <begin position="1"/>
        <end position="23"/>
    </location>
</feature>
<feature type="peptide" id="PRO_0000278843" description="Ghrelin">
    <location>
        <begin position="24"/>
        <end position="51"/>
    </location>
</feature>
<feature type="propeptide" id="PRO_0000278844" description="Removed in mature form" evidence="1">
    <location>
        <begin position="52"/>
        <end position="75"/>
    </location>
</feature>
<feature type="peptide" id="PRO_0000278845" description="Obestatin" evidence="1">
    <location>
        <begin position="76"/>
        <end position="98"/>
    </location>
</feature>
<feature type="propeptide" id="PRO_0000278846" description="Removed in mature form" evidence="1">
    <location>
        <begin position="99"/>
        <end position="117"/>
    </location>
</feature>
<feature type="region of interest" description="Disordered" evidence="3">
    <location>
        <begin position="29"/>
        <end position="67"/>
    </location>
</feature>
<feature type="compositionally biased region" description="Basic and acidic residues" evidence="3">
    <location>
        <begin position="31"/>
        <end position="43"/>
    </location>
</feature>
<feature type="modified residue" description="Leucine amide" evidence="1">
    <location>
        <position position="98"/>
    </location>
</feature>
<feature type="lipid moiety-binding region" description="O-decanoyl serine; alternate" evidence="2">
    <location>
        <position position="26"/>
    </location>
</feature>
<feature type="lipid moiety-binding region" description="O-hexanoyl serine; alternate" evidence="2">
    <location>
        <position position="26"/>
    </location>
</feature>
<feature type="lipid moiety-binding region" description="O-octanoyl serine; alternate" evidence="2">
    <location>
        <position position="26"/>
    </location>
</feature>
<protein>
    <recommendedName>
        <fullName>Appetite-regulating hormone</fullName>
    </recommendedName>
    <alternativeName>
        <fullName>Growth hormone secretagogue</fullName>
    </alternativeName>
    <alternativeName>
        <fullName>Growth hormone-releasing peptide</fullName>
    </alternativeName>
    <alternativeName>
        <fullName>Motilin-related peptide</fullName>
    </alternativeName>
    <component>
        <recommendedName>
            <fullName>Ghrelin</fullName>
        </recommendedName>
    </component>
    <component>
        <recommendedName>
            <fullName>Obestatin</fullName>
        </recommendedName>
    </component>
</protein>
<gene>
    <name type="primary">GHRL</name>
</gene>
<evidence type="ECO:0000250" key="1"/>
<evidence type="ECO:0000250" key="2">
    <source>
        <dbReference type="UniProtKB" id="Q9EQX0"/>
    </source>
</evidence>
<evidence type="ECO:0000256" key="3">
    <source>
        <dbReference type="SAM" id="MobiDB-lite"/>
    </source>
</evidence>
<evidence type="ECO:0000305" key="4"/>
<organism>
    <name type="scientific">Papio hamadryas</name>
    <name type="common">Hamadryas baboon</name>
    <dbReference type="NCBI Taxonomy" id="9557"/>
    <lineage>
        <taxon>Eukaryota</taxon>
        <taxon>Metazoa</taxon>
        <taxon>Chordata</taxon>
        <taxon>Craniata</taxon>
        <taxon>Vertebrata</taxon>
        <taxon>Euteleostomi</taxon>
        <taxon>Mammalia</taxon>
        <taxon>Eutheria</taxon>
        <taxon>Euarchontoglires</taxon>
        <taxon>Primates</taxon>
        <taxon>Haplorrhini</taxon>
        <taxon>Catarrhini</taxon>
        <taxon>Cercopithecidae</taxon>
        <taxon>Cercopithecinae</taxon>
        <taxon>Papio</taxon>
    </lineage>
</organism>
<name>GHRL_PAPHA</name>
<sequence length="117" mass="12913">MPSPGTVCSLLLLGMLWLDLAMAGSSFLSPEHQRAQQRKESKKPPAKLQPRALGGWLRPEDGDQAEGAEDELEIQFNAPFDVGIKLSGVQYQQHSQALGKFLQDILWEEAKEAPADK</sequence>
<keyword id="KW-0027">Amidation</keyword>
<keyword id="KW-0372">Hormone</keyword>
<keyword id="KW-0449">Lipoprotein</keyword>
<keyword id="KW-0964">Secreted</keyword>
<keyword id="KW-0732">Signal</keyword>
<dbReference type="EMBL" id="DQ987858">
    <property type="protein sequence ID" value="ABJ91203.1"/>
    <property type="molecule type" value="mRNA"/>
</dbReference>
<dbReference type="BMRB" id="A0MLS4"/>
<dbReference type="SMR" id="A0MLS4"/>
<dbReference type="GO" id="GO:0030424">
    <property type="term" value="C:axon"/>
    <property type="evidence" value="ECO:0000250"/>
    <property type="project" value="UniProtKB"/>
</dbReference>
<dbReference type="GO" id="GO:0005576">
    <property type="term" value="C:extracellular region"/>
    <property type="evidence" value="ECO:0000250"/>
    <property type="project" value="UniProtKB"/>
</dbReference>
<dbReference type="GO" id="GO:0005615">
    <property type="term" value="C:extracellular space"/>
    <property type="evidence" value="ECO:0000250"/>
    <property type="project" value="UniProtKB"/>
</dbReference>
<dbReference type="GO" id="GO:0031768">
    <property type="term" value="F:ghrelin receptor binding"/>
    <property type="evidence" value="ECO:0000250"/>
    <property type="project" value="UniProtKB"/>
</dbReference>
<dbReference type="GO" id="GO:0016608">
    <property type="term" value="F:growth hormone-releasing hormone activity"/>
    <property type="evidence" value="ECO:0000250"/>
    <property type="project" value="UniProtKB"/>
</dbReference>
<dbReference type="GO" id="GO:0005179">
    <property type="term" value="F:hormone activity"/>
    <property type="evidence" value="ECO:0000250"/>
    <property type="project" value="UniProtKB"/>
</dbReference>
<dbReference type="GO" id="GO:0030296">
    <property type="term" value="F:protein tyrosine kinase activator activity"/>
    <property type="evidence" value="ECO:0000250"/>
    <property type="project" value="UniProtKB"/>
</dbReference>
<dbReference type="GO" id="GO:0008154">
    <property type="term" value="P:actin polymerization or depolymerization"/>
    <property type="evidence" value="ECO:0000250"/>
    <property type="project" value="UniProtKB"/>
</dbReference>
<dbReference type="GO" id="GO:0046697">
    <property type="term" value="P:decidualization"/>
    <property type="evidence" value="ECO:0000250"/>
    <property type="project" value="UniProtKB"/>
</dbReference>
<dbReference type="GO" id="GO:0016358">
    <property type="term" value="P:dendrite development"/>
    <property type="evidence" value="ECO:0000250"/>
    <property type="project" value="UniProtKB"/>
</dbReference>
<dbReference type="GO" id="GO:0001696">
    <property type="term" value="P:gastric acid secretion"/>
    <property type="evidence" value="ECO:0007669"/>
    <property type="project" value="TreeGrafter"/>
</dbReference>
<dbReference type="GO" id="GO:0043066">
    <property type="term" value="P:negative regulation of apoptotic process"/>
    <property type="evidence" value="ECO:0000250"/>
    <property type="project" value="UniProtKB"/>
</dbReference>
<dbReference type="GO" id="GO:0001937">
    <property type="term" value="P:negative regulation of endothelial cell proliferation"/>
    <property type="evidence" value="ECO:0000250"/>
    <property type="project" value="UniProtKB"/>
</dbReference>
<dbReference type="GO" id="GO:0050728">
    <property type="term" value="P:negative regulation of inflammatory response"/>
    <property type="evidence" value="ECO:0000250"/>
    <property type="project" value="UniProtKB"/>
</dbReference>
<dbReference type="GO" id="GO:0046676">
    <property type="term" value="P:negative regulation of insulin secretion"/>
    <property type="evidence" value="ECO:0000250"/>
    <property type="project" value="UniProtKB"/>
</dbReference>
<dbReference type="GO" id="GO:0032691">
    <property type="term" value="P:negative regulation of interleukin-1 beta production"/>
    <property type="evidence" value="ECO:0000250"/>
    <property type="project" value="UniProtKB"/>
</dbReference>
<dbReference type="GO" id="GO:0032715">
    <property type="term" value="P:negative regulation of interleukin-6 production"/>
    <property type="evidence" value="ECO:0000250"/>
    <property type="project" value="UniProtKB"/>
</dbReference>
<dbReference type="GO" id="GO:0032720">
    <property type="term" value="P:negative regulation of tumor necrosis factor production"/>
    <property type="evidence" value="ECO:0000250"/>
    <property type="project" value="UniProtKB"/>
</dbReference>
<dbReference type="GO" id="GO:0007204">
    <property type="term" value="P:positive regulation of cytosolic calcium ion concentration"/>
    <property type="evidence" value="ECO:0000250"/>
    <property type="project" value="UniProtKB"/>
</dbReference>
<dbReference type="GO" id="GO:0060124">
    <property type="term" value="P:positive regulation of growth hormone secretion"/>
    <property type="evidence" value="ECO:0007669"/>
    <property type="project" value="TreeGrafter"/>
</dbReference>
<dbReference type="GO" id="GO:0032024">
    <property type="term" value="P:positive regulation of insulin secretion"/>
    <property type="evidence" value="ECO:0000250"/>
    <property type="project" value="UniProtKB"/>
</dbReference>
<dbReference type="GO" id="GO:0043410">
    <property type="term" value="P:positive regulation of MAPK cascade"/>
    <property type="evidence" value="ECO:0000250"/>
    <property type="project" value="UniProtKB"/>
</dbReference>
<dbReference type="GO" id="GO:0032097">
    <property type="term" value="P:positive regulation of response to food"/>
    <property type="evidence" value="ECO:0000250"/>
    <property type="project" value="UniProtKB"/>
</dbReference>
<dbReference type="GO" id="GO:0051965">
    <property type="term" value="P:positive regulation of synapse assembly"/>
    <property type="evidence" value="ECO:0000250"/>
    <property type="project" value="UniProtKB"/>
</dbReference>
<dbReference type="GO" id="GO:0042127">
    <property type="term" value="P:regulation of cell population proliferation"/>
    <property type="evidence" value="ECO:0000250"/>
    <property type="project" value="UniProtKB"/>
</dbReference>
<dbReference type="GO" id="GO:0032095">
    <property type="term" value="P:regulation of response to food"/>
    <property type="evidence" value="ECO:0000250"/>
    <property type="project" value="UniProtKB"/>
</dbReference>
<dbReference type="GO" id="GO:0043627">
    <property type="term" value="P:response to estrogen"/>
    <property type="evidence" value="ECO:0000250"/>
    <property type="project" value="UniProtKB"/>
</dbReference>
<dbReference type="GO" id="GO:0009725">
    <property type="term" value="P:response to hormone"/>
    <property type="evidence" value="ECO:0000250"/>
    <property type="project" value="UniProtKB"/>
</dbReference>
<dbReference type="InterPro" id="IPR006737">
    <property type="entry name" value="Motilin_assoc"/>
</dbReference>
<dbReference type="InterPro" id="IPR006738">
    <property type="entry name" value="Motilin_ghrelin"/>
</dbReference>
<dbReference type="InterPro" id="IPR005441">
    <property type="entry name" value="Preproghrelin"/>
</dbReference>
<dbReference type="PANTHER" id="PTHR14122:SF1">
    <property type="entry name" value="APPETITE-REGULATING HORMONE"/>
    <property type="match status" value="1"/>
</dbReference>
<dbReference type="PANTHER" id="PTHR14122">
    <property type="entry name" value="GHRELIN PRECURSOR"/>
    <property type="match status" value="1"/>
</dbReference>
<dbReference type="Pfam" id="PF04643">
    <property type="entry name" value="Motilin_assoc"/>
    <property type="match status" value="1"/>
</dbReference>
<dbReference type="Pfam" id="PF04644">
    <property type="entry name" value="Motilin_ghrelin"/>
    <property type="match status" value="1"/>
</dbReference>
<dbReference type="PRINTS" id="PR01624">
    <property type="entry name" value="GHRELIN"/>
</dbReference>